<gene>
    <name evidence="11" type="primary">Stk11</name>
    <name type="synonym">Lkb1</name>
</gene>
<name>STK11_RAT</name>
<dbReference type="EC" id="2.7.11.1" evidence="2"/>
<dbReference type="EMBL" id="AC141331">
    <property type="status" value="NOT_ANNOTATED_CDS"/>
    <property type="molecule type" value="Genomic_DNA"/>
</dbReference>
<dbReference type="EMBL" id="CH474029">
    <property type="protein sequence ID" value="EDL89333.1"/>
    <property type="molecule type" value="Genomic_DNA"/>
</dbReference>
<dbReference type="RefSeq" id="NP_001101539.1">
    <molecule id="D4AE59-1"/>
    <property type="nucleotide sequence ID" value="NM_001108069.3"/>
</dbReference>
<dbReference type="RefSeq" id="XP_006240972.1">
    <property type="nucleotide sequence ID" value="XM_006240910.1"/>
</dbReference>
<dbReference type="RefSeq" id="XP_008763318.1">
    <molecule id="D4AE59-1"/>
    <property type="nucleotide sequence ID" value="XM_008765096.2"/>
</dbReference>
<dbReference type="SMR" id="D4AE59"/>
<dbReference type="CORUM" id="D4AE59"/>
<dbReference type="FunCoup" id="D4AE59">
    <property type="interactions" value="2698"/>
</dbReference>
<dbReference type="IntAct" id="D4AE59">
    <property type="interactions" value="1"/>
</dbReference>
<dbReference type="STRING" id="10116.ENSRNOP00000057414"/>
<dbReference type="ChEMBL" id="CHEMBL5291507"/>
<dbReference type="iPTMnet" id="D4AE59"/>
<dbReference type="PhosphoSitePlus" id="D4AE59"/>
<dbReference type="PaxDb" id="10116-ENSRNOP00000057414"/>
<dbReference type="PeptideAtlas" id="D4AE59"/>
<dbReference type="Ensembl" id="ENSRNOT00000060683.4">
    <molecule id="D4AE59-2"/>
    <property type="protein sequence ID" value="ENSRNOP00000057414.4"/>
    <property type="gene ID" value="ENSRNOG00000014287.7"/>
</dbReference>
<dbReference type="GeneID" id="314621"/>
<dbReference type="KEGG" id="rno:314621"/>
<dbReference type="UCSC" id="RGD:1308653">
    <molecule id="D4AE59-1"/>
    <property type="organism name" value="rat"/>
</dbReference>
<dbReference type="AGR" id="RGD:1308653"/>
<dbReference type="CTD" id="6794"/>
<dbReference type="RGD" id="1308653">
    <property type="gene designation" value="Stk11"/>
</dbReference>
<dbReference type="VEuPathDB" id="HostDB:ENSRNOG00000014287"/>
<dbReference type="eggNOG" id="KOG0583">
    <property type="taxonomic scope" value="Eukaryota"/>
</dbReference>
<dbReference type="GeneTree" id="ENSGT00940000158050"/>
<dbReference type="HOGENOM" id="CLU_000288_1_2_1"/>
<dbReference type="InParanoid" id="D4AE59"/>
<dbReference type="OMA" id="AYHYGSE"/>
<dbReference type="OrthoDB" id="68483at2759"/>
<dbReference type="PhylomeDB" id="D4AE59"/>
<dbReference type="TreeFam" id="TF105322"/>
<dbReference type="Reactome" id="R-RNO-380972">
    <property type="pathway name" value="Energy dependent regulation of mTOR by LKB1-AMPK"/>
</dbReference>
<dbReference type="Reactome" id="R-RNO-6804756">
    <property type="pathway name" value="Regulation of TP53 Activity through Phosphorylation"/>
</dbReference>
<dbReference type="PRO" id="PR:D4AE59"/>
<dbReference type="Proteomes" id="UP000002494">
    <property type="component" value="Chromosome 7"/>
</dbReference>
<dbReference type="Proteomes" id="UP000234681">
    <property type="component" value="Chromosome 7"/>
</dbReference>
<dbReference type="Bgee" id="ENSRNOG00000014287">
    <property type="expression patterns" value="Expressed in frontal cortex and 19 other cell types or tissues"/>
</dbReference>
<dbReference type="GO" id="GO:0005737">
    <property type="term" value="C:cytoplasm"/>
    <property type="evidence" value="ECO:0000250"/>
    <property type="project" value="UniProtKB"/>
</dbReference>
<dbReference type="GO" id="GO:0005829">
    <property type="term" value="C:cytosol"/>
    <property type="evidence" value="ECO:0000250"/>
    <property type="project" value="UniProtKB"/>
</dbReference>
<dbReference type="GO" id="GO:0140535">
    <property type="term" value="C:intracellular protein-containing complex"/>
    <property type="evidence" value="ECO:0000266"/>
    <property type="project" value="RGD"/>
</dbReference>
<dbReference type="GO" id="GO:0016020">
    <property type="term" value="C:membrane"/>
    <property type="evidence" value="ECO:0000250"/>
    <property type="project" value="UniProtKB"/>
</dbReference>
<dbReference type="GO" id="GO:0005739">
    <property type="term" value="C:mitochondrion"/>
    <property type="evidence" value="ECO:0000250"/>
    <property type="project" value="UniProtKB"/>
</dbReference>
<dbReference type="GO" id="GO:0005634">
    <property type="term" value="C:nucleus"/>
    <property type="evidence" value="ECO:0000266"/>
    <property type="project" value="RGD"/>
</dbReference>
<dbReference type="GO" id="GO:0032991">
    <property type="term" value="C:protein-containing complex"/>
    <property type="evidence" value="ECO:0000314"/>
    <property type="project" value="RGD"/>
</dbReference>
<dbReference type="GO" id="GO:1902554">
    <property type="term" value="C:serine/threonine protein kinase complex"/>
    <property type="evidence" value="ECO:0000266"/>
    <property type="project" value="RGD"/>
</dbReference>
<dbReference type="GO" id="GO:0030018">
    <property type="term" value="C:Z disc"/>
    <property type="evidence" value="ECO:0000314"/>
    <property type="project" value="RGD"/>
</dbReference>
<dbReference type="GO" id="GO:0005524">
    <property type="term" value="F:ATP binding"/>
    <property type="evidence" value="ECO:0000266"/>
    <property type="project" value="RGD"/>
</dbReference>
<dbReference type="GO" id="GO:0030275">
    <property type="term" value="F:LRR domain binding"/>
    <property type="evidence" value="ECO:0000266"/>
    <property type="project" value="RGD"/>
</dbReference>
<dbReference type="GO" id="GO:0000287">
    <property type="term" value="F:magnesium ion binding"/>
    <property type="evidence" value="ECO:0000266"/>
    <property type="project" value="RGD"/>
</dbReference>
<dbReference type="GO" id="GO:0002039">
    <property type="term" value="F:p53 binding"/>
    <property type="evidence" value="ECO:0000250"/>
    <property type="project" value="UniProtKB"/>
</dbReference>
<dbReference type="GO" id="GO:0030295">
    <property type="term" value="F:protein kinase activator activity"/>
    <property type="evidence" value="ECO:0000250"/>
    <property type="project" value="UniProtKB"/>
</dbReference>
<dbReference type="GO" id="GO:0106310">
    <property type="term" value="F:protein serine kinase activity"/>
    <property type="evidence" value="ECO:0007669"/>
    <property type="project" value="RHEA"/>
</dbReference>
<dbReference type="GO" id="GO:0004674">
    <property type="term" value="F:protein serine/threonine kinase activity"/>
    <property type="evidence" value="ECO:0000315"/>
    <property type="project" value="RGD"/>
</dbReference>
<dbReference type="GO" id="GO:0044877">
    <property type="term" value="F:protein-containing complex binding"/>
    <property type="evidence" value="ECO:0000314"/>
    <property type="project" value="RGD"/>
</dbReference>
<dbReference type="GO" id="GO:0032147">
    <property type="term" value="P:activation of protein kinase activity"/>
    <property type="evidence" value="ECO:0000250"/>
    <property type="project" value="UniProtKB"/>
</dbReference>
<dbReference type="GO" id="GO:0043276">
    <property type="term" value="P:anoikis"/>
    <property type="evidence" value="ECO:0000266"/>
    <property type="project" value="RGD"/>
</dbReference>
<dbReference type="GO" id="GO:0006914">
    <property type="term" value="P:autophagy"/>
    <property type="evidence" value="ECO:0007669"/>
    <property type="project" value="UniProtKB-KW"/>
</dbReference>
<dbReference type="GO" id="GO:0007409">
    <property type="term" value="P:axonogenesis"/>
    <property type="evidence" value="ECO:0000315"/>
    <property type="project" value="RGD"/>
</dbReference>
<dbReference type="GO" id="GO:0071493">
    <property type="term" value="P:cellular response to UV-B"/>
    <property type="evidence" value="ECO:0000266"/>
    <property type="project" value="RGD"/>
</dbReference>
<dbReference type="GO" id="GO:0097484">
    <property type="term" value="P:dendrite extension"/>
    <property type="evidence" value="ECO:0000266"/>
    <property type="project" value="RGD"/>
</dbReference>
<dbReference type="GO" id="GO:0006974">
    <property type="term" value="P:DNA damage response"/>
    <property type="evidence" value="ECO:0000266"/>
    <property type="project" value="RGD"/>
</dbReference>
<dbReference type="GO" id="GO:0060767">
    <property type="term" value="P:epithelial cell proliferation involved in prostate gland development"/>
    <property type="evidence" value="ECO:0000266"/>
    <property type="project" value="RGD"/>
</dbReference>
<dbReference type="GO" id="GO:0030010">
    <property type="term" value="P:establishment of cell polarity"/>
    <property type="evidence" value="ECO:0000315"/>
    <property type="project" value="UniProtKB"/>
</dbReference>
<dbReference type="GO" id="GO:0070314">
    <property type="term" value="P:G1 to G0 transition"/>
    <property type="evidence" value="ECO:0000266"/>
    <property type="project" value="RGD"/>
</dbReference>
<dbReference type="GO" id="GO:0042593">
    <property type="term" value="P:glucose homeostasis"/>
    <property type="evidence" value="ECO:0000250"/>
    <property type="project" value="UniProtKB"/>
</dbReference>
<dbReference type="GO" id="GO:0051645">
    <property type="term" value="P:Golgi localization"/>
    <property type="evidence" value="ECO:0000266"/>
    <property type="project" value="RGD"/>
</dbReference>
<dbReference type="GO" id="GO:0072332">
    <property type="term" value="P:intrinsic apoptotic signaling pathway by p53 class mediator"/>
    <property type="evidence" value="ECO:0000250"/>
    <property type="project" value="UniProtKB"/>
</dbReference>
<dbReference type="GO" id="GO:0090090">
    <property type="term" value="P:negative regulation of canonical Wnt signaling pathway"/>
    <property type="evidence" value="ECO:0000250"/>
    <property type="project" value="UniProtKB"/>
</dbReference>
<dbReference type="GO" id="GO:0030308">
    <property type="term" value="P:negative regulation of cell growth"/>
    <property type="evidence" value="ECO:0000250"/>
    <property type="project" value="UniProtKB"/>
</dbReference>
<dbReference type="GO" id="GO:0008285">
    <property type="term" value="P:negative regulation of cell population proliferation"/>
    <property type="evidence" value="ECO:0000266"/>
    <property type="project" value="RGD"/>
</dbReference>
<dbReference type="GO" id="GO:0120163">
    <property type="term" value="P:negative regulation of cold-induced thermogenesis"/>
    <property type="evidence" value="ECO:0000250"/>
    <property type="project" value="YuBioLab"/>
</dbReference>
<dbReference type="GO" id="GO:0060770">
    <property type="term" value="P:negative regulation of epithelial cell proliferation involved in prostate gland development"/>
    <property type="evidence" value="ECO:0000266"/>
    <property type="project" value="RGD"/>
</dbReference>
<dbReference type="GO" id="GO:1904262">
    <property type="term" value="P:negative regulation of TORC1 signaling"/>
    <property type="evidence" value="ECO:0000266"/>
    <property type="project" value="RGD"/>
</dbReference>
<dbReference type="GO" id="GO:0010508">
    <property type="term" value="P:positive regulation of autophagy"/>
    <property type="evidence" value="ECO:0000266"/>
    <property type="project" value="RGD"/>
</dbReference>
<dbReference type="GO" id="GO:0050772">
    <property type="term" value="P:positive regulation of axonogenesis"/>
    <property type="evidence" value="ECO:0000266"/>
    <property type="project" value="RGD"/>
</dbReference>
<dbReference type="GO" id="GO:2000774">
    <property type="term" value="P:positive regulation of cellular senescence"/>
    <property type="evidence" value="ECO:0000266"/>
    <property type="project" value="RGD"/>
</dbReference>
<dbReference type="GO" id="GO:0045722">
    <property type="term" value="P:positive regulation of gluconeogenesis"/>
    <property type="evidence" value="ECO:0000315"/>
    <property type="project" value="RGD"/>
</dbReference>
<dbReference type="GO" id="GO:1900182">
    <property type="term" value="P:positive regulation of protein localization to nucleus"/>
    <property type="evidence" value="ECO:0000266"/>
    <property type="project" value="RGD"/>
</dbReference>
<dbReference type="GO" id="GO:0030511">
    <property type="term" value="P:positive regulation of transforming growth factor beta receptor signaling pathway"/>
    <property type="evidence" value="ECO:0000266"/>
    <property type="project" value="RGD"/>
</dbReference>
<dbReference type="GO" id="GO:1901610">
    <property type="term" value="P:positive regulation of vesicle transport along microtubule"/>
    <property type="evidence" value="ECO:0000315"/>
    <property type="project" value="UniProtKB"/>
</dbReference>
<dbReference type="GO" id="GO:0045059">
    <property type="term" value="P:positive thymic T cell selection"/>
    <property type="evidence" value="ECO:0000266"/>
    <property type="project" value="RGD"/>
</dbReference>
<dbReference type="GO" id="GO:0046777">
    <property type="term" value="P:protein autophosphorylation"/>
    <property type="evidence" value="ECO:0000250"/>
    <property type="project" value="UniProtKB"/>
</dbReference>
<dbReference type="GO" id="GO:0006470">
    <property type="term" value="P:protein dephosphorylation"/>
    <property type="evidence" value="ECO:0000250"/>
    <property type="project" value="UniProtKB"/>
</dbReference>
<dbReference type="GO" id="GO:0034504">
    <property type="term" value="P:protein localization to nucleus"/>
    <property type="evidence" value="ECO:0000266"/>
    <property type="project" value="RGD"/>
</dbReference>
<dbReference type="GO" id="GO:0001558">
    <property type="term" value="P:regulation of cell growth"/>
    <property type="evidence" value="ECO:0000250"/>
    <property type="project" value="UniProtKB"/>
</dbReference>
<dbReference type="GO" id="GO:0048814">
    <property type="term" value="P:regulation of dendrite morphogenesis"/>
    <property type="evidence" value="ECO:0000266"/>
    <property type="project" value="RGD"/>
</dbReference>
<dbReference type="GO" id="GO:0051896">
    <property type="term" value="P:regulation of phosphatidylinositol 3-kinase/protein kinase B signal transduction"/>
    <property type="evidence" value="ECO:0000266"/>
    <property type="project" value="RGD"/>
</dbReference>
<dbReference type="GO" id="GO:0030111">
    <property type="term" value="P:regulation of Wnt signaling pathway"/>
    <property type="evidence" value="ECO:0000266"/>
    <property type="project" value="RGD"/>
</dbReference>
<dbReference type="GO" id="GO:0014823">
    <property type="term" value="P:response to activity"/>
    <property type="evidence" value="ECO:0000270"/>
    <property type="project" value="RGD"/>
</dbReference>
<dbReference type="GO" id="GO:0033762">
    <property type="term" value="P:response to glucagon"/>
    <property type="evidence" value="ECO:0000270"/>
    <property type="project" value="RGD"/>
</dbReference>
<dbReference type="GO" id="GO:0010212">
    <property type="term" value="P:response to ionizing radiation"/>
    <property type="evidence" value="ECO:0000250"/>
    <property type="project" value="UniProtKB"/>
</dbReference>
<dbReference type="GO" id="GO:0033993">
    <property type="term" value="P:response to lipid"/>
    <property type="evidence" value="ECO:0000314"/>
    <property type="project" value="RGD"/>
</dbReference>
<dbReference type="GO" id="GO:0043434">
    <property type="term" value="P:response to peptide hormone"/>
    <property type="evidence" value="ECO:0000270"/>
    <property type="project" value="RGD"/>
</dbReference>
<dbReference type="GO" id="GO:0097066">
    <property type="term" value="P:response to thyroid hormone"/>
    <property type="evidence" value="ECO:0000270"/>
    <property type="project" value="RGD"/>
</dbReference>
<dbReference type="GO" id="GO:0007165">
    <property type="term" value="P:signal transduction"/>
    <property type="evidence" value="ECO:0000318"/>
    <property type="project" value="GO_Central"/>
</dbReference>
<dbReference type="GO" id="GO:0007283">
    <property type="term" value="P:spermatogenesis"/>
    <property type="evidence" value="ECO:0007669"/>
    <property type="project" value="UniProtKB-KW"/>
</dbReference>
<dbReference type="GO" id="GO:0050852">
    <property type="term" value="P:T cell receptor signaling pathway"/>
    <property type="evidence" value="ECO:0000266"/>
    <property type="project" value="RGD"/>
</dbReference>
<dbReference type="GO" id="GO:0001894">
    <property type="term" value="P:tissue homeostasis"/>
    <property type="evidence" value="ECO:0000266"/>
    <property type="project" value="RGD"/>
</dbReference>
<dbReference type="GO" id="GO:0001944">
    <property type="term" value="P:vasculature development"/>
    <property type="evidence" value="ECO:0000250"/>
    <property type="project" value="UniProtKB"/>
</dbReference>
<dbReference type="CDD" id="cd14119">
    <property type="entry name" value="STKc_LKB1"/>
    <property type="match status" value="1"/>
</dbReference>
<dbReference type="FunFam" id="1.10.510.10:FF:000245">
    <property type="entry name" value="serine/threonine-protein kinase STK11"/>
    <property type="match status" value="1"/>
</dbReference>
<dbReference type="FunFam" id="3.30.200.20:FF:000235">
    <property type="entry name" value="serine/threonine-protein kinase STK11"/>
    <property type="match status" value="1"/>
</dbReference>
<dbReference type="Gene3D" id="3.30.200.20">
    <property type="entry name" value="Phosphorylase Kinase, domain 1"/>
    <property type="match status" value="1"/>
</dbReference>
<dbReference type="Gene3D" id="1.10.510.10">
    <property type="entry name" value="Transferase(Phosphotransferase) domain 1"/>
    <property type="match status" value="1"/>
</dbReference>
<dbReference type="InterPro" id="IPR011009">
    <property type="entry name" value="Kinase-like_dom_sf"/>
</dbReference>
<dbReference type="InterPro" id="IPR039154">
    <property type="entry name" value="LKB1_c"/>
</dbReference>
<dbReference type="InterPro" id="IPR000719">
    <property type="entry name" value="Prot_kinase_dom"/>
</dbReference>
<dbReference type="InterPro" id="IPR017441">
    <property type="entry name" value="Protein_kinase_ATP_BS"/>
</dbReference>
<dbReference type="InterPro" id="IPR008271">
    <property type="entry name" value="Ser/Thr_kinase_AS"/>
</dbReference>
<dbReference type="PANTHER" id="PTHR24346">
    <property type="entry name" value="MAP/MICROTUBULE AFFINITY-REGULATING KINASE"/>
    <property type="match status" value="1"/>
</dbReference>
<dbReference type="PANTHER" id="PTHR24346:SF94">
    <property type="entry name" value="NON-SPECIFIC SERINE_THREONINE PROTEIN KINASE"/>
    <property type="match status" value="1"/>
</dbReference>
<dbReference type="Pfam" id="PF00069">
    <property type="entry name" value="Pkinase"/>
    <property type="match status" value="1"/>
</dbReference>
<dbReference type="SMART" id="SM00220">
    <property type="entry name" value="S_TKc"/>
    <property type="match status" value="1"/>
</dbReference>
<dbReference type="SUPFAM" id="SSF56112">
    <property type="entry name" value="Protein kinase-like (PK-like)"/>
    <property type="match status" value="1"/>
</dbReference>
<dbReference type="PROSITE" id="PS00107">
    <property type="entry name" value="PROTEIN_KINASE_ATP"/>
    <property type="match status" value="1"/>
</dbReference>
<dbReference type="PROSITE" id="PS50011">
    <property type="entry name" value="PROTEIN_KINASE_DOM"/>
    <property type="match status" value="1"/>
</dbReference>
<dbReference type="PROSITE" id="PS00108">
    <property type="entry name" value="PROTEIN_KINASE_ST"/>
    <property type="match status" value="1"/>
</dbReference>
<protein>
    <recommendedName>
        <fullName evidence="10">Serine/threonine-protein kinase STK11</fullName>
        <ecNumber evidence="2">2.7.11.1</ecNumber>
    </recommendedName>
    <alternativeName>
        <fullName>Liver kinase B1 homolog</fullName>
        <shortName>LKB1</shortName>
    </alternativeName>
</protein>
<reference key="1">
    <citation type="journal article" date="2004" name="Nature">
        <title>Genome sequence of the Brown Norway rat yields insights into mammalian evolution.</title>
        <authorList>
            <person name="Gibbs R.A."/>
            <person name="Weinstock G.M."/>
            <person name="Metzker M.L."/>
            <person name="Muzny D.M."/>
            <person name="Sodergren E.J."/>
            <person name="Scherer S."/>
            <person name="Scott G."/>
            <person name="Steffen D."/>
            <person name="Worley K.C."/>
            <person name="Burch P.E."/>
            <person name="Okwuonu G."/>
            <person name="Hines S."/>
            <person name="Lewis L."/>
            <person name="Deramo C."/>
            <person name="Delgado O."/>
            <person name="Dugan-Rocha S."/>
            <person name="Miner G."/>
            <person name="Morgan M."/>
            <person name="Hawes A."/>
            <person name="Gill R."/>
            <person name="Holt R.A."/>
            <person name="Adams M.D."/>
            <person name="Amanatides P.G."/>
            <person name="Baden-Tillson H."/>
            <person name="Barnstead M."/>
            <person name="Chin S."/>
            <person name="Evans C.A."/>
            <person name="Ferriera S."/>
            <person name="Fosler C."/>
            <person name="Glodek A."/>
            <person name="Gu Z."/>
            <person name="Jennings D."/>
            <person name="Kraft C.L."/>
            <person name="Nguyen T."/>
            <person name="Pfannkoch C.M."/>
            <person name="Sitter C."/>
            <person name="Sutton G.G."/>
            <person name="Venter J.C."/>
            <person name="Woodage T."/>
            <person name="Smith D."/>
            <person name="Lee H.-M."/>
            <person name="Gustafson E."/>
            <person name="Cahill P."/>
            <person name="Kana A."/>
            <person name="Doucette-Stamm L."/>
            <person name="Weinstock K."/>
            <person name="Fechtel K."/>
            <person name="Weiss R.B."/>
            <person name="Dunn D.M."/>
            <person name="Green E.D."/>
            <person name="Blakesley R.W."/>
            <person name="Bouffard G.G."/>
            <person name="De Jong P.J."/>
            <person name="Osoegawa K."/>
            <person name="Zhu B."/>
            <person name="Marra M."/>
            <person name="Schein J."/>
            <person name="Bosdet I."/>
            <person name="Fjell C."/>
            <person name="Jones S."/>
            <person name="Krzywinski M."/>
            <person name="Mathewson C."/>
            <person name="Siddiqui A."/>
            <person name="Wye N."/>
            <person name="McPherson J."/>
            <person name="Zhao S."/>
            <person name="Fraser C.M."/>
            <person name="Shetty J."/>
            <person name="Shatsman S."/>
            <person name="Geer K."/>
            <person name="Chen Y."/>
            <person name="Abramzon S."/>
            <person name="Nierman W.C."/>
            <person name="Havlak P.H."/>
            <person name="Chen R."/>
            <person name="Durbin K.J."/>
            <person name="Egan A."/>
            <person name="Ren Y."/>
            <person name="Song X.-Z."/>
            <person name="Li B."/>
            <person name="Liu Y."/>
            <person name="Qin X."/>
            <person name="Cawley S."/>
            <person name="Cooney A.J."/>
            <person name="D'Souza L.M."/>
            <person name="Martin K."/>
            <person name="Wu J.Q."/>
            <person name="Gonzalez-Garay M.L."/>
            <person name="Jackson A.R."/>
            <person name="Kalafus K.J."/>
            <person name="McLeod M.P."/>
            <person name="Milosavljevic A."/>
            <person name="Virk D."/>
            <person name="Volkov A."/>
            <person name="Wheeler D.A."/>
            <person name="Zhang Z."/>
            <person name="Bailey J.A."/>
            <person name="Eichler E.E."/>
            <person name="Tuzun E."/>
            <person name="Birney E."/>
            <person name="Mongin E."/>
            <person name="Ureta-Vidal A."/>
            <person name="Woodwark C."/>
            <person name="Zdobnov E."/>
            <person name="Bork P."/>
            <person name="Suyama M."/>
            <person name="Torrents D."/>
            <person name="Alexandersson M."/>
            <person name="Trask B.J."/>
            <person name="Young J.M."/>
            <person name="Huang H."/>
            <person name="Wang H."/>
            <person name="Xing H."/>
            <person name="Daniels S."/>
            <person name="Gietzen D."/>
            <person name="Schmidt J."/>
            <person name="Stevens K."/>
            <person name="Vitt U."/>
            <person name="Wingrove J."/>
            <person name="Camara F."/>
            <person name="Mar Alba M."/>
            <person name="Abril J.F."/>
            <person name="Guigo R."/>
            <person name="Smit A."/>
            <person name="Dubchak I."/>
            <person name="Rubin E.M."/>
            <person name="Couronne O."/>
            <person name="Poliakov A."/>
            <person name="Huebner N."/>
            <person name="Ganten D."/>
            <person name="Goesele C."/>
            <person name="Hummel O."/>
            <person name="Kreitler T."/>
            <person name="Lee Y.-A."/>
            <person name="Monti J."/>
            <person name="Schulz H."/>
            <person name="Zimdahl H."/>
            <person name="Himmelbauer H."/>
            <person name="Lehrach H."/>
            <person name="Jacob H.J."/>
            <person name="Bromberg S."/>
            <person name="Gullings-Handley J."/>
            <person name="Jensen-Seaman M.I."/>
            <person name="Kwitek A.E."/>
            <person name="Lazar J."/>
            <person name="Pasko D."/>
            <person name="Tonellato P.J."/>
            <person name="Twigger S."/>
            <person name="Ponting C.P."/>
            <person name="Duarte J.M."/>
            <person name="Rice S."/>
            <person name="Goodstadt L."/>
            <person name="Beatson S.A."/>
            <person name="Emes R.D."/>
            <person name="Winter E.E."/>
            <person name="Webber C."/>
            <person name="Brandt P."/>
            <person name="Nyakatura G."/>
            <person name="Adetobi M."/>
            <person name="Chiaromonte F."/>
            <person name="Elnitski L."/>
            <person name="Eswara P."/>
            <person name="Hardison R.C."/>
            <person name="Hou M."/>
            <person name="Kolbe D."/>
            <person name="Makova K."/>
            <person name="Miller W."/>
            <person name="Nekrutenko A."/>
            <person name="Riemer C."/>
            <person name="Schwartz S."/>
            <person name="Taylor J."/>
            <person name="Yang S."/>
            <person name="Zhang Y."/>
            <person name="Lindpaintner K."/>
            <person name="Andrews T.D."/>
            <person name="Caccamo M."/>
            <person name="Clamp M."/>
            <person name="Clarke L."/>
            <person name="Curwen V."/>
            <person name="Durbin R.M."/>
            <person name="Eyras E."/>
            <person name="Searle S.M."/>
            <person name="Cooper G.M."/>
            <person name="Batzoglou S."/>
            <person name="Brudno M."/>
            <person name="Sidow A."/>
            <person name="Stone E.A."/>
            <person name="Payseur B.A."/>
            <person name="Bourque G."/>
            <person name="Lopez-Otin C."/>
            <person name="Puente X.S."/>
            <person name="Chakrabarti K."/>
            <person name="Chatterji S."/>
            <person name="Dewey C."/>
            <person name="Pachter L."/>
            <person name="Bray N."/>
            <person name="Yap V.B."/>
            <person name="Caspi A."/>
            <person name="Tesler G."/>
            <person name="Pevzner P.A."/>
            <person name="Haussler D."/>
            <person name="Roskin K.M."/>
            <person name="Baertsch R."/>
            <person name="Clawson H."/>
            <person name="Furey T.S."/>
            <person name="Hinrichs A.S."/>
            <person name="Karolchik D."/>
            <person name="Kent W.J."/>
            <person name="Rosenbloom K.R."/>
            <person name="Trumbower H."/>
            <person name="Weirauch M."/>
            <person name="Cooper D.N."/>
            <person name="Stenson P.D."/>
            <person name="Ma B."/>
            <person name="Brent M."/>
            <person name="Arumugam M."/>
            <person name="Shteynberg D."/>
            <person name="Copley R.R."/>
            <person name="Taylor M.S."/>
            <person name="Riethman H."/>
            <person name="Mudunuri U."/>
            <person name="Peterson J."/>
            <person name="Guyer M."/>
            <person name="Felsenfeld A."/>
            <person name="Old S."/>
            <person name="Mockrin S."/>
            <person name="Collins F.S."/>
        </authorList>
    </citation>
    <scope>NUCLEOTIDE SEQUENCE [LARGE SCALE GENOMIC DNA]</scope>
    <source>
        <strain>Brown Norway</strain>
    </source>
</reference>
<reference key="2">
    <citation type="submission" date="2005-07" db="EMBL/GenBank/DDBJ databases">
        <authorList>
            <person name="Mural R.J."/>
            <person name="Adams M.D."/>
            <person name="Myers E.W."/>
            <person name="Smith H.O."/>
            <person name="Venter J.C."/>
        </authorList>
    </citation>
    <scope>NUCLEOTIDE SEQUENCE [LARGE SCALE GENOMIC DNA]</scope>
    <source>
        <strain>Brown Norway</strain>
    </source>
</reference>
<reference key="3">
    <citation type="journal article" date="2003" name="J. Biol.">
        <title>Complexes between the LKB1 tumor suppressor, STRAD alpha/beta and MO25 alpha/beta are upstream kinases in the AMP-activated protein kinase cascade.</title>
        <authorList>
            <person name="Hawley S.A."/>
            <person name="Boudeau J."/>
            <person name="Reid J.L."/>
            <person name="Mustard K.J."/>
            <person name="Udd L."/>
            <person name="Makela T.P."/>
            <person name="Alessi D.R."/>
            <person name="Hardie D.G."/>
        </authorList>
    </citation>
    <scope>IDENTIFICATION IN A COMPLEX WITH STRADA AND CAB39</scope>
    <scope>INTERACTION WITH STRADA; STRADB; CAB39 AND CAB39L</scope>
</reference>
<reference key="4">
    <citation type="journal article" date="2008" name="Biochem. J.">
        <title>A novel short splice variant of the tumour suppressor LKB1 is required for spermiogenesis.</title>
        <authorList>
            <person name="Towler M.C."/>
            <person name="Fogarty S."/>
            <person name="Hawley S.A."/>
            <person name="Pan D.A."/>
            <person name="Martin D.M."/>
            <person name="Morrice N.A."/>
            <person name="McCarthy A."/>
            <person name="Galardo M.N."/>
            <person name="Meroni S.B."/>
            <person name="Cigorraga S.B."/>
            <person name="Ashworth A."/>
            <person name="Sakamoto K."/>
            <person name="Hardie D.G."/>
        </authorList>
    </citation>
    <scope>ALTERNATIVE SPLICING (ISOFORMS 1 AND 2)</scope>
    <scope>IDENTIFICATION BY MASS SPECTROMETRY</scope>
    <scope>FUNCTION</scope>
    <scope>IDENTIFICATION IN A COMPLEX WITH STRADA AND CAB39</scope>
    <scope>SUBCELLULAR LOCATION</scope>
    <scope>TISSUE SPECIFICITY</scope>
    <scope>DEVELOPMENTAL STAGE</scope>
</reference>
<reference key="5">
    <citation type="journal article" date="2008" name="J. Biol. Chem.">
        <title>SIRT1 modulation of the acetylation status, cytosolic localization, and activity of LKB1. Possible role in AMP-activated protein kinase activation.</title>
        <authorList>
            <person name="Lan F."/>
            <person name="Cacicedo J.M."/>
            <person name="Ruderman N."/>
            <person name="Ido Y."/>
        </authorList>
    </citation>
    <scope>ACETYLATION</scope>
</reference>
<reference key="6">
    <citation type="journal article" date="2012" name="Nat. Commun.">
        <title>Quantitative maps of protein phosphorylation sites across 14 different rat organs and tissues.</title>
        <authorList>
            <person name="Lundby A."/>
            <person name="Secher A."/>
            <person name="Lage K."/>
            <person name="Nordsborg N.B."/>
            <person name="Dmytriyev A."/>
            <person name="Lundby C."/>
            <person name="Olsen J.V."/>
        </authorList>
    </citation>
    <scope>PHOSPHORYLATION [LARGE SCALE ANALYSIS] AT SER-31</scope>
    <scope>IDENTIFICATION BY MASS SPECTROMETRY [LARGE SCALE ANALYSIS]</scope>
</reference>
<comment type="function">
    <text evidence="3 9">Tumor suppressor serine/threonine-protein kinase that controls the activity of AMP-activated protein kinase (AMPK) family members, thereby playing a role in various processes such as cell metabolism, cell polarity, apoptosis and DNA damage response. Acts by phosphorylating the T-loop of AMPK family proteins, thus promoting their activity: phosphorylates PRKAA1, PRKAA2, BRSK1, BRSK2, MARK1, MARK2, MARK3, MARK4, NUAK1, NUAK2, SIK1, SIK2, SIK3 and SNRK but not MELK. Also phosphorylates non-AMPK family proteins such as STRADA, PTEN and possibly p53/TP53. Acts as a key upstream regulator of AMPK by mediating phosphorylation and activation of AMPK catalytic subunits PRKAA1 and PRKAA2 and thereby regulates processes including: inhibition of signaling pathways that promote cell growth and proliferation when energy levels are low, glucose homeostasis in liver, activation of autophagy when cells undergo nutrient deprivation, and B-cell differentiation in the germinal center in response to DNA damage. Also acts as a regulator of cellular polarity by remodeling the actin cytoskeleton. Required for cortical neuron polarization by mediating phosphorylation and activation of BRSK1 and BRSK2, leading to axon initiation and specification. Involved in DNA damage response: interacts with p53/TP53 and recruited to the CDKN1A/WAF1 promoter to participate in transcription activation. Able to phosphorylate p53/TP53; the relevance of such result in vivo is however unclear and phosphorylation may be indirect and mediated by downstream STK11/LKB1 kinase NUAK1. Also acts as a mediator of p53/TP53-dependent apoptosis via interaction with p53/TP53: translocates to the mitochondrion during apoptosis and regulates p53/TP53-dependent apoptosis pathways. Regulates UV radiation-induced DNA damage response mediated by CDKN1A. In association with NUAK1, phosphorylates CDKN1A in response to UV radiation and contributes to its degradation which is necessary for optimal DNA repair (By similarity).</text>
</comment>
<comment type="function">
    <molecule>Isoform 2</molecule>
    <text evidence="9">Has a role in spermiogenesis.</text>
</comment>
<comment type="catalytic activity">
    <reaction>
        <text>L-seryl-[protein] + ATP = O-phospho-L-seryl-[protein] + ADP + H(+)</text>
        <dbReference type="Rhea" id="RHEA:17989"/>
        <dbReference type="Rhea" id="RHEA-COMP:9863"/>
        <dbReference type="Rhea" id="RHEA-COMP:11604"/>
        <dbReference type="ChEBI" id="CHEBI:15378"/>
        <dbReference type="ChEBI" id="CHEBI:29999"/>
        <dbReference type="ChEBI" id="CHEBI:30616"/>
        <dbReference type="ChEBI" id="CHEBI:83421"/>
        <dbReference type="ChEBI" id="CHEBI:456216"/>
        <dbReference type="EC" id="2.7.11.1"/>
    </reaction>
</comment>
<comment type="catalytic activity">
    <reaction>
        <text>L-threonyl-[protein] + ATP = O-phospho-L-threonyl-[protein] + ADP + H(+)</text>
        <dbReference type="Rhea" id="RHEA:46608"/>
        <dbReference type="Rhea" id="RHEA-COMP:11060"/>
        <dbReference type="Rhea" id="RHEA-COMP:11605"/>
        <dbReference type="ChEBI" id="CHEBI:15378"/>
        <dbReference type="ChEBI" id="CHEBI:30013"/>
        <dbReference type="ChEBI" id="CHEBI:30616"/>
        <dbReference type="ChEBI" id="CHEBI:61977"/>
        <dbReference type="ChEBI" id="CHEBI:456216"/>
        <dbReference type="EC" id="2.7.11.1"/>
    </reaction>
</comment>
<comment type="cofactor">
    <cofactor evidence="1">
        <name>Mg(2+)</name>
        <dbReference type="ChEBI" id="CHEBI:18420"/>
    </cofactor>
    <cofactor evidence="1">
        <name>Mn(2+)</name>
        <dbReference type="ChEBI" id="CHEBI:29035"/>
    </cofactor>
</comment>
<comment type="activity regulation">
    <text evidence="1">Activated by forming a complex with STRAD (STRADA or STRADB) and CAB39/MO25 (CAB39/MO25alpha or CAB39L/MO25beta): STRADA (or STRADB)-binding promotes a conformational change of STK11/LKB1 in an active conformation, which is stabilized by CAB39/MO25alpha (or CAB39L/MO25beta) interacting with the STK11/LKB1 activation loop. Sequestration in the nucleus by NR4A1 prevents it from phosphorylating and activating cytoplasmic AMPK (By similarity).</text>
</comment>
<comment type="subunit">
    <text evidence="3 7 9">Catalytic component of a trimeric complex composed of STK11/LKB1, STRAD (STRADA or STRADB) and CAB39/MO25 (CAB39/MO25alpha or CAB39L/MO25beta): the complex tethers STK11/LKB1 in the cytoplasm and stimulates its catalytic activity. Found in a ternary complex composed of SMAD4, STK11/LKB1 and STK11IP (By similarity). Interacts with NR4A1, p53/TP53, SMAD4, STK11IP and WDR6 (By similarity). Interacts with NISCH; this interaction may increase STK11 activity (By similarity). Interacts with SIRT1; the interaction deacetylates STK11 (By similarity). Interacts with CDKN1A (By similarity).</text>
</comment>
<comment type="subcellular location">
    <subcellularLocation>
        <location evidence="9">Nucleus</location>
    </subcellularLocation>
    <subcellularLocation>
        <location evidence="9">Cytoplasm</location>
    </subcellularLocation>
    <subcellularLocation>
        <location evidence="9">Membrane</location>
    </subcellularLocation>
    <subcellularLocation>
        <location evidence="1">Mitochondrion</location>
    </subcellularLocation>
    <text evidence="1">A small fraction localizes at membranes. Relocates to the cytoplasm when bound to STRAD (STRADA or STRADB) and CAB39/MO25 (CAB39/MO25alpha or CAB39L/MO25beta). Translocates to the mitochondrion during apoptosis (By similarity). PTEN promotes cytoplasmic localization (By similarity).</text>
</comment>
<comment type="subcellular location">
    <molecule>Isoform 2</molecule>
    <subcellularLocation>
        <location>Nucleus</location>
    </subcellularLocation>
    <subcellularLocation>
        <location>Cytoplasm</location>
    </subcellularLocation>
    <text>Relocates to the cytoplasm when bound to STRAD (STRADA or STRADB) and CAB39/MO25 (CAB39/MO25alpha or CAB39L/MO25beta).</text>
</comment>
<comment type="alternative products">
    <event type="alternative splicing"/>
    <isoform>
        <id>D4AE59-1</id>
        <name>1</name>
        <name>LKB1(L)</name>
        <sequence type="displayed"/>
    </isoform>
    <isoform>
        <id>D4AE59-2</id>
        <name>2</name>
        <name>LKB1(S)</name>
        <sequence type="described" ref="VSP_055418"/>
    </isoform>
</comment>
<comment type="tissue specificity">
    <text evidence="9">Expressed in brain, heart, testis, skeletal muscle and spleen, and weakly in liver and kidney. Isoform 1 is expressed at highest levels in the brain. Isoform 2 is expressed at highest levels in the testis, primarily in postmitotic developing germ cells (at protein level).</text>
</comment>
<comment type="developmental stage">
    <text evidence="9">Isoform 2 is expressed in testis from 30 days of age, with significantly increased levels by 60 days; this corresponds to the stage when haploid spermatids appear.</text>
</comment>
<comment type="PTM">
    <text evidence="3">Phosphorylated by ATM at Thr-366 following ionizing radiation (IR). Phosphorylation at Ser-431 by RPS6KA1 and/or some PKA is required to inhibit cell growth. Phosphorylation at Ser-431 is also required during neuronal polarization to mediate phosphorylation of BRSK1 and BRSK2. Phosphorylation by PKC/PRKCZ at Ser-397 in isoform 2 promotes metformin (or peroxynitrite)-induced nuclear export of STK11 and activation of AMPK. UV radiation -induced phosphorylation at Thr-366 mediates CDKN1A degradation.</text>
</comment>
<comment type="PTM">
    <text evidence="8">Acetylated. Deacetylation at Lys-48 enhances cytoplasmic localization and kinase activity in vitro.</text>
</comment>
<comment type="similarity">
    <text evidence="10">Belongs to the protein kinase superfamily. CAMK Ser/Thr protein kinase family. LKB1 subfamily.</text>
</comment>
<keyword id="KW-0007">Acetylation</keyword>
<keyword id="KW-0025">Alternative splicing</keyword>
<keyword id="KW-0053">Apoptosis</keyword>
<keyword id="KW-0067">ATP-binding</keyword>
<keyword id="KW-0072">Autophagy</keyword>
<keyword id="KW-0131">Cell cycle</keyword>
<keyword id="KW-0963">Cytoplasm</keyword>
<keyword id="KW-0221">Differentiation</keyword>
<keyword id="KW-0227">DNA damage</keyword>
<keyword id="KW-0418">Kinase</keyword>
<keyword id="KW-0449">Lipoprotein</keyword>
<keyword id="KW-0460">Magnesium</keyword>
<keyword id="KW-0464">Manganese</keyword>
<keyword id="KW-0472">Membrane</keyword>
<keyword id="KW-0479">Metal-binding</keyword>
<keyword id="KW-0488">Methylation</keyword>
<keyword id="KW-0496">Mitochondrion</keyword>
<keyword id="KW-0547">Nucleotide-binding</keyword>
<keyword id="KW-0539">Nucleus</keyword>
<keyword id="KW-0564">Palmitate</keyword>
<keyword id="KW-0597">Phosphoprotein</keyword>
<keyword id="KW-0636">Prenylation</keyword>
<keyword id="KW-1185">Reference proteome</keyword>
<keyword id="KW-0723">Serine/threonine-protein kinase</keyword>
<keyword id="KW-0744">Spermatogenesis</keyword>
<keyword id="KW-0808">Transferase</keyword>
<keyword id="KW-0043">Tumor suppressor</keyword>
<evidence type="ECO:0000250" key="1"/>
<evidence type="ECO:0000250" key="2">
    <source>
        <dbReference type="UniProtKB" id="Q15831"/>
    </source>
</evidence>
<evidence type="ECO:0000250" key="3">
    <source>
        <dbReference type="UniProtKB" id="Q9WTK7"/>
    </source>
</evidence>
<evidence type="ECO:0000255" key="4">
    <source>
        <dbReference type="PROSITE-ProRule" id="PRU00159"/>
    </source>
</evidence>
<evidence type="ECO:0000255" key="5">
    <source>
        <dbReference type="PROSITE-ProRule" id="PRU10027"/>
    </source>
</evidence>
<evidence type="ECO:0000256" key="6">
    <source>
        <dbReference type="SAM" id="MobiDB-lite"/>
    </source>
</evidence>
<evidence type="ECO:0000269" key="7">
    <source>
    </source>
</evidence>
<evidence type="ECO:0000269" key="8">
    <source>
    </source>
</evidence>
<evidence type="ECO:0000269" key="9">
    <source>
    </source>
</evidence>
<evidence type="ECO:0000305" key="10"/>
<evidence type="ECO:0000312" key="11">
    <source>
        <dbReference type="RGD" id="1308653"/>
    </source>
</evidence>
<evidence type="ECO:0007744" key="12">
    <source>
    </source>
</evidence>
<sequence>MDVADPQPLGLFPEGELMSVGMDTFIHRIDSTEVIYQPRRKRAKLIGKYLMGDLLGEGSYGKVKEVLDSETLCRRAVKILKKKKLRRIPNGEANVKKEIQLLRRLRHRNVIQLVDVLYNEEKQKMYMVMEYCVCGMQEMLDSVPEKRFPVCQAHGYFRQLIDGLEYLHSQGIVHKDIKPGNLLLTTNGTLKISDLGVAEALHPFAVDDTCRTSQGSPAFQPPEIANGLDTFSGFKVDIWSAGVTLYNITTGLYPFEGDNIYKLFENIGRGDFTIPCDCAPPLSDLLRGMLEYEPAKRFSIRQIRQHSWFRKKHPLAEALVPIPPSPDTKDRWRSMTVVPYLEDLHGRAEEEEDEDLFDIEDGIIYTQDFTVPGQVLEEEVGQNGQSHSLPKAVCVNGTEPQLSSKVKPEGRPGAANPARKVCSSNKIRRLSACKQQ</sequence>
<feature type="chain" id="PRO_0000412651" description="Serine/threonine-protein kinase STK11">
    <location>
        <begin position="1"/>
        <end position="433"/>
    </location>
</feature>
<feature type="propeptide" id="PRO_0000422302" description="Removed in mature form" evidence="1">
    <location>
        <begin position="434"/>
        <end position="436"/>
    </location>
</feature>
<feature type="domain" description="Protein kinase" evidence="4">
    <location>
        <begin position="49"/>
        <end position="309"/>
    </location>
</feature>
<feature type="region of interest" description="Sufficient for interaction with SIRT1" evidence="1">
    <location>
        <begin position="45"/>
        <end position="90"/>
    </location>
</feature>
<feature type="region of interest" description="Disordered" evidence="6">
    <location>
        <begin position="397"/>
        <end position="421"/>
    </location>
</feature>
<feature type="active site" description="Proton acceptor" evidence="4 5">
    <location>
        <position position="176"/>
    </location>
</feature>
<feature type="binding site" evidence="4">
    <location>
        <begin position="55"/>
        <end position="63"/>
    </location>
    <ligand>
        <name>ATP</name>
        <dbReference type="ChEBI" id="CHEBI:30616"/>
    </ligand>
</feature>
<feature type="binding site" evidence="4">
    <location>
        <position position="78"/>
    </location>
    <ligand>
        <name>ATP</name>
        <dbReference type="ChEBI" id="CHEBI:30616"/>
    </ligand>
</feature>
<feature type="modified residue" description="Phosphoserine" evidence="12">
    <location>
        <position position="31"/>
    </location>
</feature>
<feature type="modified residue" description="N6-acetyllysine" evidence="2">
    <location>
        <position position="44"/>
    </location>
</feature>
<feature type="modified residue" description="N6-acetyllysine" evidence="2">
    <location>
        <position position="48"/>
    </location>
</feature>
<feature type="modified residue" description="N6-acetyllysine" evidence="2">
    <location>
        <position position="96"/>
    </location>
</feature>
<feature type="modified residue" description="N6-acetyllysine" evidence="2">
    <location>
        <position position="97"/>
    </location>
</feature>
<feature type="modified residue" description="Phosphothreonine; by autocatalysis" evidence="2">
    <location>
        <position position="189"/>
    </location>
</feature>
<feature type="modified residue" description="N6-acetyllysine" evidence="2">
    <location>
        <position position="296"/>
    </location>
</feature>
<feature type="modified residue" description="N6-acetyllysine" evidence="2">
    <location>
        <position position="311"/>
    </location>
</feature>
<feature type="modified residue" description="Phosphoserine" evidence="3">
    <location>
        <position position="325"/>
    </location>
</feature>
<feature type="modified residue" description="Phosphothreonine; by autocatalysis" evidence="2">
    <location>
        <position position="336"/>
    </location>
</feature>
<feature type="modified residue" description="Phosphothreonine; by ATM and autocatalysis" evidence="2">
    <location>
        <position position="366"/>
    </location>
</feature>
<feature type="modified residue" description="Phosphoserine" evidence="2">
    <location>
        <position position="403"/>
    </location>
</feature>
<feature type="modified residue" description="N6-acetyllysine" evidence="2">
    <location>
        <position position="420"/>
    </location>
</feature>
<feature type="modified residue" description="N6-acetyllysine" evidence="2">
    <location>
        <position position="426"/>
    </location>
</feature>
<feature type="modified residue" description="Phosphoserine; by autocatalysis, PKA, PKC/PRKCZ and RPS6KA1" evidence="2">
    <location>
        <position position="431"/>
    </location>
</feature>
<feature type="modified residue" description="Cysteine methyl ester" evidence="1">
    <location>
        <position position="433"/>
    </location>
</feature>
<feature type="modified residue" description="N6-acetyllysine" evidence="2">
    <location>
        <position position="434"/>
    </location>
</feature>
<feature type="lipid moiety-binding region" description="S-palmitoyl cysteine" evidence="1">
    <location>
        <position position="422"/>
    </location>
</feature>
<feature type="lipid moiety-binding region" description="S-farnesyl cysteine" evidence="1">
    <location>
        <position position="433"/>
    </location>
</feature>
<feature type="splice variant" id="VSP_055418" description="In isoform 2." evidence="10">
    <original>QVLEEEVGQNGQSHSLPKAVCVNGTEPQLSSKVKPEGRPGAANPARKVCSSNKIRRLSACKQQ</original>
    <variation>VEETAESGLSEDACDTCMWKSQGAGLPGEEPEEGFGAVV</variation>
    <location>
        <begin position="374"/>
        <end position="436"/>
    </location>
</feature>
<proteinExistence type="evidence at protein level"/>
<accession>D4AE59</accession>
<accession>A0A0H2UI02</accession>
<accession>D4A179</accession>
<organism>
    <name type="scientific">Rattus norvegicus</name>
    <name type="common">Rat</name>
    <dbReference type="NCBI Taxonomy" id="10116"/>
    <lineage>
        <taxon>Eukaryota</taxon>
        <taxon>Metazoa</taxon>
        <taxon>Chordata</taxon>
        <taxon>Craniata</taxon>
        <taxon>Vertebrata</taxon>
        <taxon>Euteleostomi</taxon>
        <taxon>Mammalia</taxon>
        <taxon>Eutheria</taxon>
        <taxon>Euarchontoglires</taxon>
        <taxon>Glires</taxon>
        <taxon>Rodentia</taxon>
        <taxon>Myomorpha</taxon>
        <taxon>Muroidea</taxon>
        <taxon>Muridae</taxon>
        <taxon>Murinae</taxon>
        <taxon>Rattus</taxon>
    </lineage>
</organism>